<proteinExistence type="predicted"/>
<gene>
    <name type="primary">ORF36</name>
</gene>
<sequence length="147" mass="16029">MDGIFPSTDKMLYENVTIWREASGEYQTATTLSHYNHALPDSGSPCDEFRASLKKNGISSLLTTRGPVTCIKFQIPEDKVISLETLACLEGTIKVVGDYCYITVTTGDTVLEPPTPSQPAPTPEPAVKPQPIATRKRSGLSALLWPF</sequence>
<organism>
    <name type="scientific">Ictalurid herpesvirus 1 (strain Auburn)</name>
    <name type="common">IcHV-1</name>
    <name type="synonym">Channel catfish herpesvirus</name>
    <dbReference type="NCBI Taxonomy" id="766178"/>
    <lineage>
        <taxon>Viruses</taxon>
        <taxon>Duplodnaviria</taxon>
        <taxon>Heunggongvirae</taxon>
        <taxon>Peploviricota</taxon>
        <taxon>Herviviricetes</taxon>
        <taxon>Herpesvirales</taxon>
        <taxon>Alloherpesviridae</taxon>
        <taxon>Ictavirus</taxon>
        <taxon>Ictavirus ictaluridallo1</taxon>
        <taxon>Ictalurid herpesvirus 1</taxon>
    </lineage>
</organism>
<accession>Q00146</accession>
<feature type="chain" id="PRO_0000222118" description="Uncharacterized protein ORF36">
    <location>
        <begin position="1"/>
        <end position="147"/>
    </location>
</feature>
<feature type="region of interest" description="Disordered" evidence="1">
    <location>
        <begin position="110"/>
        <end position="133"/>
    </location>
</feature>
<feature type="compositionally biased region" description="Pro residues" evidence="1">
    <location>
        <begin position="113"/>
        <end position="128"/>
    </location>
</feature>
<dbReference type="EMBL" id="M75136">
    <property type="protein sequence ID" value="AAA88139.1"/>
    <property type="molecule type" value="Genomic_DNA"/>
</dbReference>
<dbReference type="PIR" id="A36790">
    <property type="entry name" value="A36790"/>
</dbReference>
<dbReference type="RefSeq" id="NP_041127.1">
    <property type="nucleotide sequence ID" value="NC_001493.2"/>
</dbReference>
<dbReference type="GeneID" id="1488430"/>
<dbReference type="KEGG" id="vg:1488430"/>
<dbReference type="Proteomes" id="UP000007643">
    <property type="component" value="Segment"/>
</dbReference>
<evidence type="ECO:0000256" key="1">
    <source>
        <dbReference type="SAM" id="MobiDB-lite"/>
    </source>
</evidence>
<organismHost>
    <name type="scientific">Ictaluridae</name>
    <name type="common">bullhead catfishes</name>
    <dbReference type="NCBI Taxonomy" id="7996"/>
</organismHost>
<keyword id="KW-1185">Reference proteome</keyword>
<name>VG36_ICHVA</name>
<reference key="1">
    <citation type="journal article" date="1992" name="Virology">
        <title>Channel catfish virus: a new type of herpesvirus.</title>
        <authorList>
            <person name="Davison A.J."/>
        </authorList>
    </citation>
    <scope>NUCLEOTIDE SEQUENCE [LARGE SCALE GENOMIC DNA]</scope>
</reference>
<protein>
    <recommendedName>
        <fullName>Uncharacterized protein ORF36</fullName>
    </recommendedName>
</protein>